<proteinExistence type="inferred from homology"/>
<evidence type="ECO:0000255" key="1">
    <source>
        <dbReference type="HAMAP-Rule" id="MF_03115"/>
    </source>
</evidence>
<protein>
    <recommendedName>
        <fullName evidence="1">Anamorsin homolog 1</fullName>
    </recommendedName>
    <alternativeName>
        <fullName evidence="1">Fe-S cluster assembly protein DRE2 homolog 1</fullName>
    </alternativeName>
</protein>
<comment type="function">
    <text evidence="1">Component of the cytosolic iron-sulfur (Fe-S) protein assembly (CIA) machinery. Required for the maturation of extramitochondrial Fe-S proteins. Part of an electron transfer chain functioning in an early step of cytosolic Fe-S biogenesis, facilitating the de novo assembly of a [4Fe-4S] cluster on the cytosolic Fe-S scaffold complex. Electrons are transferred from NADPH via a FAD- and FMN-containing diflavin oxidoreductase. Together with the diflavin oxidoreductase, also required for the assembly of the diferric tyrosyl radical cofactor of ribonucleotide reductase (RNR), probably by providing electrons for reduction during radical cofactor maturation in the catalytic small subunit.</text>
</comment>
<comment type="cofactor">
    <cofactor evidence="1">
        <name>[2Fe-2S] cluster</name>
        <dbReference type="ChEBI" id="CHEBI:190135"/>
    </cofactor>
</comment>
<comment type="cofactor">
    <cofactor evidence="1">
        <name>[4Fe-4S] cluster</name>
        <dbReference type="ChEBI" id="CHEBI:49883"/>
    </cofactor>
</comment>
<comment type="subunit">
    <text evidence="1">Monomer.</text>
</comment>
<comment type="subcellular location">
    <subcellularLocation>
        <location evidence="1">Cytoplasm</location>
    </subcellularLocation>
    <subcellularLocation>
        <location evidence="1">Mitochondrion intermembrane space</location>
    </subcellularLocation>
</comment>
<comment type="domain">
    <text evidence="1">The C-terminal domain binds 2 Fe-S clusters but is otherwise mostly in an intrinsically disordered conformation.</text>
</comment>
<comment type="domain">
    <text evidence="1">The N-terminal domain has structural similarity with S-adenosyl-L-methionine-dependent methyltransferases, but does not bind S-adenosyl-L-methionine. It is required for correct assembly of the 2 Fe-S clusters.</text>
</comment>
<comment type="domain">
    <text evidence="1">The twin Cx2C motifs are involved in the recognition by the mitochondrial MIA40-ERV1 disulfide relay system. The formation of 2 disulfide bonds in the Cx2C motifs through dithiol/disulfide exchange reactions effectively traps the protein in the mitochondrial intermembrane space.</text>
</comment>
<comment type="similarity">
    <text evidence="1">Belongs to the anamorsin family.</text>
</comment>
<organism>
    <name type="scientific">Physcomitrium patens</name>
    <name type="common">Spreading-leaved earth moss</name>
    <name type="synonym">Physcomitrella patens</name>
    <dbReference type="NCBI Taxonomy" id="3218"/>
    <lineage>
        <taxon>Eukaryota</taxon>
        <taxon>Viridiplantae</taxon>
        <taxon>Streptophyta</taxon>
        <taxon>Embryophyta</taxon>
        <taxon>Bryophyta</taxon>
        <taxon>Bryophytina</taxon>
        <taxon>Bryopsida</taxon>
        <taxon>Funariidae</taxon>
        <taxon>Funariales</taxon>
        <taxon>Funariaceae</taxon>
        <taxon>Physcomitrium</taxon>
    </lineage>
</organism>
<sequence>MANNVGVLLATDMQALPDSVEQWAIKNYEDKLSGGASLQVAKNILESSFKLEAGTSSMGAVVSLVQTPGLHSPAYLAEVARVLVSGGDLIVQEPLLAEAQEQKCSSAQTKAQLERNLLLAGFVNLEVVDSVVGVEIAKACTTSSVALNVVAVKSSKPSWDTGSVFQIRKKVSNQNGNFRTSGNYQPVKLTAGETVDDFPLNSKPAVKVDLSSDFKNDEEELIDEDDLLTEEDLKAPVLPAAESCAPTKKACKNCTCGRAELEEKEQETKLTTAQINNPTSSCGSCGLGDAFRCAGCPYRGMPTFKLGEKVFSGFLLWNQYIRSVPLISKLGNITLGGSLLVADA</sequence>
<reference key="1">
    <citation type="journal article" date="2008" name="Science">
        <title>The Physcomitrella genome reveals evolutionary insights into the conquest of land by plants.</title>
        <authorList>
            <person name="Rensing S.A."/>
            <person name="Lang D."/>
            <person name="Zimmer A.D."/>
            <person name="Terry A."/>
            <person name="Salamov A."/>
            <person name="Shapiro H."/>
            <person name="Nishiyama T."/>
            <person name="Perroud P.-F."/>
            <person name="Lindquist E.A."/>
            <person name="Kamisugi Y."/>
            <person name="Tanahashi T."/>
            <person name="Sakakibara K."/>
            <person name="Fujita T."/>
            <person name="Oishi K."/>
            <person name="Shin-I T."/>
            <person name="Kuroki Y."/>
            <person name="Toyoda A."/>
            <person name="Suzuki Y."/>
            <person name="Hashimoto S.-I."/>
            <person name="Yamaguchi K."/>
            <person name="Sugano S."/>
            <person name="Kohara Y."/>
            <person name="Fujiyama A."/>
            <person name="Anterola A."/>
            <person name="Aoki S."/>
            <person name="Ashton N."/>
            <person name="Barbazuk W.B."/>
            <person name="Barker E."/>
            <person name="Bennetzen J.L."/>
            <person name="Blankenship R."/>
            <person name="Cho S.H."/>
            <person name="Dutcher S.K."/>
            <person name="Estelle M."/>
            <person name="Fawcett J.A."/>
            <person name="Gundlach H."/>
            <person name="Hanada K."/>
            <person name="Heyl A."/>
            <person name="Hicks K.A."/>
            <person name="Hughes J."/>
            <person name="Lohr M."/>
            <person name="Mayer K."/>
            <person name="Melkozernov A."/>
            <person name="Murata T."/>
            <person name="Nelson D.R."/>
            <person name="Pils B."/>
            <person name="Prigge M."/>
            <person name="Reiss B."/>
            <person name="Renner T."/>
            <person name="Rombauts S."/>
            <person name="Rushton P.J."/>
            <person name="Sanderfoot A."/>
            <person name="Schween G."/>
            <person name="Shiu S.-H."/>
            <person name="Stueber K."/>
            <person name="Theodoulou F.L."/>
            <person name="Tu H."/>
            <person name="Van de Peer Y."/>
            <person name="Verrier P.J."/>
            <person name="Waters E."/>
            <person name="Wood A."/>
            <person name="Yang L."/>
            <person name="Cove D."/>
            <person name="Cuming A.C."/>
            <person name="Hasebe M."/>
            <person name="Lucas S."/>
            <person name="Mishler B.D."/>
            <person name="Reski R."/>
            <person name="Grigoriev I.V."/>
            <person name="Quatrano R.S."/>
            <person name="Boore J.L."/>
        </authorList>
    </citation>
    <scope>NUCLEOTIDE SEQUENCE [LARGE SCALE GENOMIC DNA]</scope>
    <source>
        <strain>cv. Gransden 2004</strain>
    </source>
</reference>
<feature type="chain" id="PRO_0000392342" description="Anamorsin homolog 1">
    <location>
        <begin position="1"/>
        <end position="344"/>
    </location>
</feature>
<feature type="region of interest" description="N-terminal SAM-like domain" evidence="1">
    <location>
        <begin position="1"/>
        <end position="169"/>
    </location>
</feature>
<feature type="region of interest" description="Linker" evidence="1">
    <location>
        <begin position="170"/>
        <end position="233"/>
    </location>
</feature>
<feature type="region of interest" description="Fe-S binding site A" evidence="1">
    <location>
        <begin position="244"/>
        <end position="256"/>
    </location>
</feature>
<feature type="region of interest" description="Fe-S binding site B" evidence="1">
    <location>
        <begin position="282"/>
        <end position="296"/>
    </location>
</feature>
<feature type="short sequence motif" description="Cx2C motif 1" evidence="1">
    <location>
        <begin position="282"/>
        <end position="285"/>
    </location>
</feature>
<feature type="short sequence motif" description="Cx2C motif 2" evidence="1">
    <location>
        <begin position="293"/>
        <end position="296"/>
    </location>
</feature>
<feature type="binding site" evidence="1">
    <location>
        <position position="244"/>
    </location>
    <ligand>
        <name>[2Fe-2S] cluster</name>
        <dbReference type="ChEBI" id="CHEBI:190135"/>
    </ligand>
</feature>
<feature type="binding site" evidence="1">
    <location>
        <position position="251"/>
    </location>
    <ligand>
        <name>[2Fe-2S] cluster</name>
        <dbReference type="ChEBI" id="CHEBI:190135"/>
    </ligand>
</feature>
<feature type="binding site" evidence="1">
    <location>
        <position position="254"/>
    </location>
    <ligand>
        <name>[2Fe-2S] cluster</name>
        <dbReference type="ChEBI" id="CHEBI:190135"/>
    </ligand>
</feature>
<feature type="binding site" evidence="1">
    <location>
        <position position="256"/>
    </location>
    <ligand>
        <name>[2Fe-2S] cluster</name>
        <dbReference type="ChEBI" id="CHEBI:190135"/>
    </ligand>
</feature>
<feature type="binding site" evidence="1">
    <location>
        <position position="282"/>
    </location>
    <ligand>
        <name>[4Fe-4S] cluster</name>
        <dbReference type="ChEBI" id="CHEBI:49883"/>
    </ligand>
</feature>
<feature type="binding site" evidence="1">
    <location>
        <position position="285"/>
    </location>
    <ligand>
        <name>[4Fe-4S] cluster</name>
        <dbReference type="ChEBI" id="CHEBI:49883"/>
    </ligand>
</feature>
<feature type="binding site" evidence="1">
    <location>
        <position position="293"/>
    </location>
    <ligand>
        <name>[4Fe-4S] cluster</name>
        <dbReference type="ChEBI" id="CHEBI:49883"/>
    </ligand>
</feature>
<feature type="binding site" evidence="1">
    <location>
        <position position="296"/>
    </location>
    <ligand>
        <name>[4Fe-4S] cluster</name>
        <dbReference type="ChEBI" id="CHEBI:49883"/>
    </ligand>
</feature>
<dbReference type="EMBL" id="DS544941">
    <property type="protein sequence ID" value="EDQ73134.1"/>
    <property type="molecule type" value="Genomic_DNA"/>
</dbReference>
<dbReference type="RefSeq" id="XP_001762030.1">
    <property type="nucleotide sequence ID" value="XM_001761978.1"/>
</dbReference>
<dbReference type="SMR" id="A9S6X4"/>
<dbReference type="FunCoup" id="A9S6X4">
    <property type="interactions" value="4203"/>
</dbReference>
<dbReference type="PaxDb" id="3218-PP1S52_243V6.3"/>
<dbReference type="eggNOG" id="KOG4020">
    <property type="taxonomic scope" value="Eukaryota"/>
</dbReference>
<dbReference type="InParanoid" id="A9S6X4"/>
<dbReference type="Proteomes" id="UP000006727">
    <property type="component" value="Unplaced"/>
</dbReference>
<dbReference type="GO" id="GO:0005737">
    <property type="term" value="C:cytoplasm"/>
    <property type="evidence" value="ECO:0000318"/>
    <property type="project" value="GO_Central"/>
</dbReference>
<dbReference type="GO" id="GO:0005758">
    <property type="term" value="C:mitochondrial intermembrane space"/>
    <property type="evidence" value="ECO:0007669"/>
    <property type="project" value="UniProtKB-SubCell"/>
</dbReference>
<dbReference type="GO" id="GO:0051537">
    <property type="term" value="F:2 iron, 2 sulfur cluster binding"/>
    <property type="evidence" value="ECO:0007669"/>
    <property type="project" value="UniProtKB-UniRule"/>
</dbReference>
<dbReference type="GO" id="GO:0051539">
    <property type="term" value="F:4 iron, 4 sulfur cluster binding"/>
    <property type="evidence" value="ECO:0007669"/>
    <property type="project" value="UniProtKB-KW"/>
</dbReference>
<dbReference type="GO" id="GO:0009055">
    <property type="term" value="F:electron transfer activity"/>
    <property type="evidence" value="ECO:0007669"/>
    <property type="project" value="UniProtKB-UniRule"/>
</dbReference>
<dbReference type="GO" id="GO:0046872">
    <property type="term" value="F:metal ion binding"/>
    <property type="evidence" value="ECO:0007669"/>
    <property type="project" value="UniProtKB-KW"/>
</dbReference>
<dbReference type="GO" id="GO:0016226">
    <property type="term" value="P:iron-sulfur cluster assembly"/>
    <property type="evidence" value="ECO:0000318"/>
    <property type="project" value="GO_Central"/>
</dbReference>
<dbReference type="FunFam" id="3.40.50.150:FF:000740">
    <property type="entry name" value="Anamorsin homolog 1"/>
    <property type="match status" value="1"/>
</dbReference>
<dbReference type="Gene3D" id="3.40.50.150">
    <property type="entry name" value="Vaccinia Virus protein VP39"/>
    <property type="match status" value="1"/>
</dbReference>
<dbReference type="HAMAP" id="MF_03115">
    <property type="entry name" value="Anamorsin"/>
    <property type="match status" value="1"/>
</dbReference>
<dbReference type="InterPro" id="IPR007785">
    <property type="entry name" value="Anamorsin"/>
</dbReference>
<dbReference type="InterPro" id="IPR049011">
    <property type="entry name" value="Anamorsin_N_metazoan"/>
</dbReference>
<dbReference type="InterPro" id="IPR046408">
    <property type="entry name" value="CIAPIN1"/>
</dbReference>
<dbReference type="InterPro" id="IPR029063">
    <property type="entry name" value="SAM-dependent_MTases_sf"/>
</dbReference>
<dbReference type="PANTHER" id="PTHR13273">
    <property type="entry name" value="ANAMORSIN"/>
    <property type="match status" value="1"/>
</dbReference>
<dbReference type="PANTHER" id="PTHR13273:SF14">
    <property type="entry name" value="ANAMORSIN"/>
    <property type="match status" value="1"/>
</dbReference>
<dbReference type="Pfam" id="PF20922">
    <property type="entry name" value="Anamorsin_N"/>
    <property type="match status" value="1"/>
</dbReference>
<dbReference type="Pfam" id="PF05093">
    <property type="entry name" value="CIAPIN1"/>
    <property type="match status" value="1"/>
</dbReference>
<keyword id="KW-0001">2Fe-2S</keyword>
<keyword id="KW-0004">4Fe-4S</keyword>
<keyword id="KW-0963">Cytoplasm</keyword>
<keyword id="KW-0408">Iron</keyword>
<keyword id="KW-0411">Iron-sulfur</keyword>
<keyword id="KW-0479">Metal-binding</keyword>
<keyword id="KW-0496">Mitochondrion</keyword>
<keyword id="KW-1185">Reference proteome</keyword>
<name>DRE21_PHYPA</name>
<gene>
    <name type="ORF">PHYPADRAFT_163171</name>
</gene>
<accession>A9S6X4</accession>